<gene>
    <name evidence="1" type="primary">prs</name>
    <name type="synonym">prsA</name>
    <name type="ordered locus">PP_0722</name>
</gene>
<sequence length="313" mass="34192">MSKMMVFTGNANPDLARRVVRQLHIPLGDVSVGKFSDGEISTEINENVRGKDVFIIQPTCAPTNDNLMELVVMADAFRRSSASRITAVIPYFGYARQDRRPRSARVAISAKVVADMLTVVGIDRVLTVDLHADQIQGFFDIPVDNIYGSPVLVDDIEDQRFENLMIVSPDIGGVVRARAVAKSLGVDLGIIDKRREKANHSEVMHIIGDVEGRTCILVDDMVDTAGTLCHAAKALKEHGAAKVYAYCTHPVLSGRAIENIEKSVLDELVVTNTVPLSAAAQACDRIRQLDIAPVVAEAVRRISNEESISAMFR</sequence>
<keyword id="KW-0067">ATP-binding</keyword>
<keyword id="KW-0963">Cytoplasm</keyword>
<keyword id="KW-0418">Kinase</keyword>
<keyword id="KW-0460">Magnesium</keyword>
<keyword id="KW-0479">Metal-binding</keyword>
<keyword id="KW-0545">Nucleotide biosynthesis</keyword>
<keyword id="KW-0547">Nucleotide-binding</keyword>
<keyword id="KW-1185">Reference proteome</keyword>
<keyword id="KW-0808">Transferase</keyword>
<comment type="function">
    <text evidence="1">Involved in the biosynthesis of the central metabolite phospho-alpha-D-ribosyl-1-pyrophosphate (PRPP) via the transfer of pyrophosphoryl group from ATP to 1-hydroxyl of ribose-5-phosphate (Rib-5-P).</text>
</comment>
<comment type="catalytic activity">
    <reaction evidence="1">
        <text>D-ribose 5-phosphate + ATP = 5-phospho-alpha-D-ribose 1-diphosphate + AMP + H(+)</text>
        <dbReference type="Rhea" id="RHEA:15609"/>
        <dbReference type="ChEBI" id="CHEBI:15378"/>
        <dbReference type="ChEBI" id="CHEBI:30616"/>
        <dbReference type="ChEBI" id="CHEBI:58017"/>
        <dbReference type="ChEBI" id="CHEBI:78346"/>
        <dbReference type="ChEBI" id="CHEBI:456215"/>
        <dbReference type="EC" id="2.7.6.1"/>
    </reaction>
</comment>
<comment type="cofactor">
    <cofactor evidence="1">
        <name>Mg(2+)</name>
        <dbReference type="ChEBI" id="CHEBI:18420"/>
    </cofactor>
    <text evidence="1">Binds 2 Mg(2+) ions per subunit.</text>
</comment>
<comment type="pathway">
    <text evidence="1">Metabolic intermediate biosynthesis; 5-phospho-alpha-D-ribose 1-diphosphate biosynthesis; 5-phospho-alpha-D-ribose 1-diphosphate from D-ribose 5-phosphate (route I): step 1/1.</text>
</comment>
<comment type="subunit">
    <text evidence="1">Homohexamer.</text>
</comment>
<comment type="subcellular location">
    <subcellularLocation>
        <location evidence="1">Cytoplasm</location>
    </subcellularLocation>
</comment>
<comment type="similarity">
    <text evidence="1">Belongs to the ribose-phosphate pyrophosphokinase family. Class I subfamily.</text>
</comment>
<name>KPRS_PSEPK</name>
<organism>
    <name type="scientific">Pseudomonas putida (strain ATCC 47054 / DSM 6125 / CFBP 8728 / NCIMB 11950 / KT2440)</name>
    <dbReference type="NCBI Taxonomy" id="160488"/>
    <lineage>
        <taxon>Bacteria</taxon>
        <taxon>Pseudomonadati</taxon>
        <taxon>Pseudomonadota</taxon>
        <taxon>Gammaproteobacteria</taxon>
        <taxon>Pseudomonadales</taxon>
        <taxon>Pseudomonadaceae</taxon>
        <taxon>Pseudomonas</taxon>
    </lineage>
</organism>
<evidence type="ECO:0000255" key="1">
    <source>
        <dbReference type="HAMAP-Rule" id="MF_00583"/>
    </source>
</evidence>
<proteinExistence type="inferred from homology"/>
<feature type="chain" id="PRO_0000141177" description="Ribose-phosphate pyrophosphokinase">
    <location>
        <begin position="1"/>
        <end position="313"/>
    </location>
</feature>
<feature type="active site" evidence="1">
    <location>
        <position position="193"/>
    </location>
</feature>
<feature type="binding site" evidence="1">
    <location>
        <begin position="37"/>
        <end position="39"/>
    </location>
    <ligand>
        <name>ATP</name>
        <dbReference type="ChEBI" id="CHEBI:30616"/>
    </ligand>
</feature>
<feature type="binding site" evidence="1">
    <location>
        <begin position="96"/>
        <end position="97"/>
    </location>
    <ligand>
        <name>ATP</name>
        <dbReference type="ChEBI" id="CHEBI:30616"/>
    </ligand>
</feature>
<feature type="binding site" evidence="1">
    <location>
        <position position="131"/>
    </location>
    <ligand>
        <name>Mg(2+)</name>
        <dbReference type="ChEBI" id="CHEBI:18420"/>
        <label>1</label>
    </ligand>
</feature>
<feature type="binding site" evidence="1">
    <location>
        <position position="170"/>
    </location>
    <ligand>
        <name>Mg(2+)</name>
        <dbReference type="ChEBI" id="CHEBI:18420"/>
        <label>2</label>
    </ligand>
</feature>
<feature type="binding site" evidence="1">
    <location>
        <position position="195"/>
    </location>
    <ligand>
        <name>D-ribose 5-phosphate</name>
        <dbReference type="ChEBI" id="CHEBI:78346"/>
    </ligand>
</feature>
<feature type="binding site" evidence="1">
    <location>
        <position position="219"/>
    </location>
    <ligand>
        <name>D-ribose 5-phosphate</name>
        <dbReference type="ChEBI" id="CHEBI:78346"/>
    </ligand>
</feature>
<feature type="binding site" evidence="1">
    <location>
        <begin position="223"/>
        <end position="227"/>
    </location>
    <ligand>
        <name>D-ribose 5-phosphate</name>
        <dbReference type="ChEBI" id="CHEBI:78346"/>
    </ligand>
</feature>
<reference key="1">
    <citation type="journal article" date="2002" name="Environ. Microbiol.">
        <title>Complete genome sequence and comparative analysis of the metabolically versatile Pseudomonas putida KT2440.</title>
        <authorList>
            <person name="Nelson K.E."/>
            <person name="Weinel C."/>
            <person name="Paulsen I.T."/>
            <person name="Dodson R.J."/>
            <person name="Hilbert H."/>
            <person name="Martins dos Santos V.A.P."/>
            <person name="Fouts D.E."/>
            <person name="Gill S.R."/>
            <person name="Pop M."/>
            <person name="Holmes M."/>
            <person name="Brinkac L.M."/>
            <person name="Beanan M.J."/>
            <person name="DeBoy R.T."/>
            <person name="Daugherty S.C."/>
            <person name="Kolonay J.F."/>
            <person name="Madupu R."/>
            <person name="Nelson W.C."/>
            <person name="White O."/>
            <person name="Peterson J.D."/>
            <person name="Khouri H.M."/>
            <person name="Hance I."/>
            <person name="Chris Lee P."/>
            <person name="Holtzapple E.K."/>
            <person name="Scanlan D."/>
            <person name="Tran K."/>
            <person name="Moazzez A."/>
            <person name="Utterback T.R."/>
            <person name="Rizzo M."/>
            <person name="Lee K."/>
            <person name="Kosack D."/>
            <person name="Moestl D."/>
            <person name="Wedler H."/>
            <person name="Lauber J."/>
            <person name="Stjepandic D."/>
            <person name="Hoheisel J."/>
            <person name="Straetz M."/>
            <person name="Heim S."/>
            <person name="Kiewitz C."/>
            <person name="Eisen J.A."/>
            <person name="Timmis K.N."/>
            <person name="Duesterhoeft A."/>
            <person name="Tuemmler B."/>
            <person name="Fraser C.M."/>
        </authorList>
    </citation>
    <scope>NUCLEOTIDE SEQUENCE [LARGE SCALE GENOMIC DNA]</scope>
    <source>
        <strain>ATCC 47054 / DSM 6125 / CFBP 8728 / NCIMB 11950 / KT2440</strain>
    </source>
</reference>
<accession>Q88PX6</accession>
<protein>
    <recommendedName>
        <fullName evidence="1">Ribose-phosphate pyrophosphokinase</fullName>
        <shortName evidence="1">RPPK</shortName>
        <ecNumber evidence="1">2.7.6.1</ecNumber>
    </recommendedName>
    <alternativeName>
        <fullName evidence="1">5-phospho-D-ribosyl alpha-1-diphosphate synthase</fullName>
    </alternativeName>
    <alternativeName>
        <fullName evidence="1">Phosphoribosyl diphosphate synthase</fullName>
    </alternativeName>
    <alternativeName>
        <fullName evidence="1">Phosphoribosyl pyrophosphate synthase</fullName>
        <shortName evidence="1">P-Rib-PP synthase</shortName>
        <shortName evidence="1">PRPP synthase</shortName>
        <shortName evidence="1">PRPPase</shortName>
    </alternativeName>
</protein>
<dbReference type="EC" id="2.7.6.1" evidence="1"/>
<dbReference type="EMBL" id="AE015451">
    <property type="protein sequence ID" value="AAN66347.1"/>
    <property type="molecule type" value="Genomic_DNA"/>
</dbReference>
<dbReference type="RefSeq" id="NP_742883.1">
    <property type="nucleotide sequence ID" value="NC_002947.4"/>
</dbReference>
<dbReference type="RefSeq" id="WP_003247410.1">
    <property type="nucleotide sequence ID" value="NZ_CP169744.1"/>
</dbReference>
<dbReference type="SMR" id="Q88PX6"/>
<dbReference type="STRING" id="160488.PP_0722"/>
<dbReference type="PaxDb" id="160488-PP_0722"/>
<dbReference type="KEGG" id="ppu:PP_0722"/>
<dbReference type="PATRIC" id="fig|160488.4.peg.771"/>
<dbReference type="eggNOG" id="COG0462">
    <property type="taxonomic scope" value="Bacteria"/>
</dbReference>
<dbReference type="HOGENOM" id="CLU_033546_2_0_6"/>
<dbReference type="OrthoDB" id="9777067at2"/>
<dbReference type="PhylomeDB" id="Q88PX6"/>
<dbReference type="BioCyc" id="PPUT160488:G1G01-796-MONOMER"/>
<dbReference type="UniPathway" id="UPA00087">
    <property type="reaction ID" value="UER00172"/>
</dbReference>
<dbReference type="Proteomes" id="UP000000556">
    <property type="component" value="Chromosome"/>
</dbReference>
<dbReference type="GO" id="GO:0005737">
    <property type="term" value="C:cytoplasm"/>
    <property type="evidence" value="ECO:0007669"/>
    <property type="project" value="UniProtKB-SubCell"/>
</dbReference>
<dbReference type="GO" id="GO:0002189">
    <property type="term" value="C:ribose phosphate diphosphokinase complex"/>
    <property type="evidence" value="ECO:0007669"/>
    <property type="project" value="TreeGrafter"/>
</dbReference>
<dbReference type="GO" id="GO:0005524">
    <property type="term" value="F:ATP binding"/>
    <property type="evidence" value="ECO:0007669"/>
    <property type="project" value="UniProtKB-KW"/>
</dbReference>
<dbReference type="GO" id="GO:0016301">
    <property type="term" value="F:kinase activity"/>
    <property type="evidence" value="ECO:0007669"/>
    <property type="project" value="UniProtKB-KW"/>
</dbReference>
<dbReference type="GO" id="GO:0000287">
    <property type="term" value="F:magnesium ion binding"/>
    <property type="evidence" value="ECO:0007669"/>
    <property type="project" value="UniProtKB-UniRule"/>
</dbReference>
<dbReference type="GO" id="GO:0004749">
    <property type="term" value="F:ribose phosphate diphosphokinase activity"/>
    <property type="evidence" value="ECO:0007669"/>
    <property type="project" value="UniProtKB-UniRule"/>
</dbReference>
<dbReference type="GO" id="GO:0006015">
    <property type="term" value="P:5-phosphoribose 1-diphosphate biosynthetic process"/>
    <property type="evidence" value="ECO:0007669"/>
    <property type="project" value="UniProtKB-UniRule"/>
</dbReference>
<dbReference type="GO" id="GO:0006164">
    <property type="term" value="P:purine nucleotide biosynthetic process"/>
    <property type="evidence" value="ECO:0007669"/>
    <property type="project" value="TreeGrafter"/>
</dbReference>
<dbReference type="GO" id="GO:0009156">
    <property type="term" value="P:ribonucleoside monophosphate biosynthetic process"/>
    <property type="evidence" value="ECO:0007669"/>
    <property type="project" value="InterPro"/>
</dbReference>
<dbReference type="CDD" id="cd06223">
    <property type="entry name" value="PRTases_typeI"/>
    <property type="match status" value="1"/>
</dbReference>
<dbReference type="FunFam" id="3.40.50.2020:FF:000001">
    <property type="entry name" value="Ribose-phosphate pyrophosphokinase"/>
    <property type="match status" value="1"/>
</dbReference>
<dbReference type="Gene3D" id="3.40.50.2020">
    <property type="match status" value="2"/>
</dbReference>
<dbReference type="HAMAP" id="MF_00583_B">
    <property type="entry name" value="RibP_PPkinase_B"/>
    <property type="match status" value="1"/>
</dbReference>
<dbReference type="InterPro" id="IPR000842">
    <property type="entry name" value="PRib_PP_synth_CS"/>
</dbReference>
<dbReference type="InterPro" id="IPR029099">
    <property type="entry name" value="Pribosyltran_N"/>
</dbReference>
<dbReference type="InterPro" id="IPR000836">
    <property type="entry name" value="PRibTrfase_dom"/>
</dbReference>
<dbReference type="InterPro" id="IPR029057">
    <property type="entry name" value="PRTase-like"/>
</dbReference>
<dbReference type="InterPro" id="IPR005946">
    <property type="entry name" value="Rib-P_diPkinase"/>
</dbReference>
<dbReference type="InterPro" id="IPR037515">
    <property type="entry name" value="Rib-P_diPkinase_bac"/>
</dbReference>
<dbReference type="NCBIfam" id="NF002320">
    <property type="entry name" value="PRK01259.1"/>
    <property type="match status" value="1"/>
</dbReference>
<dbReference type="NCBIfam" id="TIGR01251">
    <property type="entry name" value="ribP_PPkin"/>
    <property type="match status" value="1"/>
</dbReference>
<dbReference type="PANTHER" id="PTHR10210">
    <property type="entry name" value="RIBOSE-PHOSPHATE DIPHOSPHOKINASE FAMILY MEMBER"/>
    <property type="match status" value="1"/>
</dbReference>
<dbReference type="PANTHER" id="PTHR10210:SF41">
    <property type="entry name" value="RIBOSE-PHOSPHATE PYROPHOSPHOKINASE 1, CHLOROPLASTIC"/>
    <property type="match status" value="1"/>
</dbReference>
<dbReference type="Pfam" id="PF14572">
    <property type="entry name" value="Pribosyl_synth"/>
    <property type="match status" value="1"/>
</dbReference>
<dbReference type="Pfam" id="PF13793">
    <property type="entry name" value="Pribosyltran_N"/>
    <property type="match status" value="1"/>
</dbReference>
<dbReference type="SMART" id="SM01400">
    <property type="entry name" value="Pribosyltran_N"/>
    <property type="match status" value="1"/>
</dbReference>
<dbReference type="SUPFAM" id="SSF53271">
    <property type="entry name" value="PRTase-like"/>
    <property type="match status" value="1"/>
</dbReference>
<dbReference type="PROSITE" id="PS00114">
    <property type="entry name" value="PRPP_SYNTHASE"/>
    <property type="match status" value="1"/>
</dbReference>